<gene>
    <name evidence="1" type="primary">rpsM</name>
    <name type="ordered locus">Bcav_3115</name>
</gene>
<dbReference type="EMBL" id="CP001618">
    <property type="protein sequence ID" value="ACQ81359.1"/>
    <property type="molecule type" value="Genomic_DNA"/>
</dbReference>
<dbReference type="RefSeq" id="WP_015883599.1">
    <property type="nucleotide sequence ID" value="NC_012669.1"/>
</dbReference>
<dbReference type="SMR" id="C5C0G3"/>
<dbReference type="STRING" id="471853.Bcav_3115"/>
<dbReference type="KEGG" id="bcv:Bcav_3115"/>
<dbReference type="eggNOG" id="COG0099">
    <property type="taxonomic scope" value="Bacteria"/>
</dbReference>
<dbReference type="HOGENOM" id="CLU_103849_1_2_11"/>
<dbReference type="OrthoDB" id="9803610at2"/>
<dbReference type="Proteomes" id="UP000007962">
    <property type="component" value="Chromosome"/>
</dbReference>
<dbReference type="GO" id="GO:0005829">
    <property type="term" value="C:cytosol"/>
    <property type="evidence" value="ECO:0007669"/>
    <property type="project" value="TreeGrafter"/>
</dbReference>
<dbReference type="GO" id="GO:0015935">
    <property type="term" value="C:small ribosomal subunit"/>
    <property type="evidence" value="ECO:0007669"/>
    <property type="project" value="TreeGrafter"/>
</dbReference>
<dbReference type="GO" id="GO:0019843">
    <property type="term" value="F:rRNA binding"/>
    <property type="evidence" value="ECO:0007669"/>
    <property type="project" value="UniProtKB-UniRule"/>
</dbReference>
<dbReference type="GO" id="GO:0003735">
    <property type="term" value="F:structural constituent of ribosome"/>
    <property type="evidence" value="ECO:0007669"/>
    <property type="project" value="InterPro"/>
</dbReference>
<dbReference type="GO" id="GO:0000049">
    <property type="term" value="F:tRNA binding"/>
    <property type="evidence" value="ECO:0007669"/>
    <property type="project" value="UniProtKB-UniRule"/>
</dbReference>
<dbReference type="GO" id="GO:0006412">
    <property type="term" value="P:translation"/>
    <property type="evidence" value="ECO:0007669"/>
    <property type="project" value="UniProtKB-UniRule"/>
</dbReference>
<dbReference type="FunFam" id="1.10.8.50:FF:000001">
    <property type="entry name" value="30S ribosomal protein S13"/>
    <property type="match status" value="1"/>
</dbReference>
<dbReference type="FunFam" id="4.10.910.10:FF:000001">
    <property type="entry name" value="30S ribosomal protein S13"/>
    <property type="match status" value="1"/>
</dbReference>
<dbReference type="Gene3D" id="1.10.8.50">
    <property type="match status" value="1"/>
</dbReference>
<dbReference type="Gene3D" id="4.10.910.10">
    <property type="entry name" value="30s ribosomal protein s13, domain 2"/>
    <property type="match status" value="1"/>
</dbReference>
<dbReference type="HAMAP" id="MF_01315">
    <property type="entry name" value="Ribosomal_uS13"/>
    <property type="match status" value="1"/>
</dbReference>
<dbReference type="InterPro" id="IPR027437">
    <property type="entry name" value="Rbsml_uS13_C"/>
</dbReference>
<dbReference type="InterPro" id="IPR001892">
    <property type="entry name" value="Ribosomal_uS13"/>
</dbReference>
<dbReference type="InterPro" id="IPR010979">
    <property type="entry name" value="Ribosomal_uS13-like_H2TH"/>
</dbReference>
<dbReference type="InterPro" id="IPR019980">
    <property type="entry name" value="Ribosomal_uS13_bac-type"/>
</dbReference>
<dbReference type="InterPro" id="IPR018269">
    <property type="entry name" value="Ribosomal_uS13_CS"/>
</dbReference>
<dbReference type="NCBIfam" id="TIGR03631">
    <property type="entry name" value="uS13_bact"/>
    <property type="match status" value="1"/>
</dbReference>
<dbReference type="PANTHER" id="PTHR10871">
    <property type="entry name" value="30S RIBOSOMAL PROTEIN S13/40S RIBOSOMAL PROTEIN S18"/>
    <property type="match status" value="1"/>
</dbReference>
<dbReference type="PANTHER" id="PTHR10871:SF1">
    <property type="entry name" value="SMALL RIBOSOMAL SUBUNIT PROTEIN US13M"/>
    <property type="match status" value="1"/>
</dbReference>
<dbReference type="Pfam" id="PF00416">
    <property type="entry name" value="Ribosomal_S13"/>
    <property type="match status" value="1"/>
</dbReference>
<dbReference type="PIRSF" id="PIRSF002134">
    <property type="entry name" value="Ribosomal_S13"/>
    <property type="match status" value="1"/>
</dbReference>
<dbReference type="SUPFAM" id="SSF46946">
    <property type="entry name" value="S13-like H2TH domain"/>
    <property type="match status" value="1"/>
</dbReference>
<dbReference type="PROSITE" id="PS00646">
    <property type="entry name" value="RIBOSOMAL_S13_1"/>
    <property type="match status" value="1"/>
</dbReference>
<dbReference type="PROSITE" id="PS50159">
    <property type="entry name" value="RIBOSOMAL_S13_2"/>
    <property type="match status" value="1"/>
</dbReference>
<proteinExistence type="inferred from homology"/>
<evidence type="ECO:0000255" key="1">
    <source>
        <dbReference type="HAMAP-Rule" id="MF_01315"/>
    </source>
</evidence>
<evidence type="ECO:0000256" key="2">
    <source>
        <dbReference type="SAM" id="MobiDB-lite"/>
    </source>
</evidence>
<evidence type="ECO:0000305" key="3"/>
<accession>C5C0G3</accession>
<sequence>MARLVGVDLPRDKRLEVALTYIYGVGRTRAADTLKATGISPDLRVKDLGDAEIVALRDHLEGNYKIEGDLRREVAADIRRKVEIGSYEGLRHRRGLPVRGQRTKTNARTRKGPKRTVAGKKKAGRK</sequence>
<name>RS13_BEUC1</name>
<comment type="function">
    <text evidence="1">Located at the top of the head of the 30S subunit, it contacts several helices of the 16S rRNA. In the 70S ribosome it contacts the 23S rRNA (bridge B1a) and protein L5 of the 50S subunit (bridge B1b), connecting the 2 subunits; these bridges are implicated in subunit movement. Contacts the tRNAs in the A and P-sites.</text>
</comment>
<comment type="subunit">
    <text evidence="1">Part of the 30S ribosomal subunit. Forms a loose heterodimer with protein S19. Forms two bridges to the 50S subunit in the 70S ribosome.</text>
</comment>
<comment type="similarity">
    <text evidence="1">Belongs to the universal ribosomal protein uS13 family.</text>
</comment>
<feature type="chain" id="PRO_1000214384" description="Small ribosomal subunit protein uS13">
    <location>
        <begin position="1"/>
        <end position="126"/>
    </location>
</feature>
<feature type="region of interest" description="Disordered" evidence="2">
    <location>
        <begin position="93"/>
        <end position="126"/>
    </location>
</feature>
<keyword id="KW-1185">Reference proteome</keyword>
<keyword id="KW-0687">Ribonucleoprotein</keyword>
<keyword id="KW-0689">Ribosomal protein</keyword>
<keyword id="KW-0694">RNA-binding</keyword>
<keyword id="KW-0699">rRNA-binding</keyword>
<keyword id="KW-0820">tRNA-binding</keyword>
<organism>
    <name type="scientific">Beutenbergia cavernae (strain ATCC BAA-8 / DSM 12333 / CCUG 43141 / JCM 11478 / NBRC 16432 / NCIMB 13614 / HKI 0122)</name>
    <dbReference type="NCBI Taxonomy" id="471853"/>
    <lineage>
        <taxon>Bacteria</taxon>
        <taxon>Bacillati</taxon>
        <taxon>Actinomycetota</taxon>
        <taxon>Actinomycetes</taxon>
        <taxon>Micrococcales</taxon>
        <taxon>Beutenbergiaceae</taxon>
        <taxon>Beutenbergia</taxon>
    </lineage>
</organism>
<protein>
    <recommendedName>
        <fullName evidence="1">Small ribosomal subunit protein uS13</fullName>
    </recommendedName>
    <alternativeName>
        <fullName evidence="3">30S ribosomal protein S13</fullName>
    </alternativeName>
</protein>
<reference key="1">
    <citation type="journal article" date="2009" name="Stand. Genomic Sci.">
        <title>Complete genome sequence of Beutenbergia cavernae type strain (HKI 0122).</title>
        <authorList>
            <person name="Land M."/>
            <person name="Pukall R."/>
            <person name="Abt B."/>
            <person name="Goker M."/>
            <person name="Rohde M."/>
            <person name="Glavina Del Rio T."/>
            <person name="Tice H."/>
            <person name="Copeland A."/>
            <person name="Cheng J.F."/>
            <person name="Lucas S."/>
            <person name="Chen F."/>
            <person name="Nolan M."/>
            <person name="Bruce D."/>
            <person name="Goodwin L."/>
            <person name="Pitluck S."/>
            <person name="Ivanova N."/>
            <person name="Mavromatis K."/>
            <person name="Ovchinnikova G."/>
            <person name="Pati A."/>
            <person name="Chen A."/>
            <person name="Palaniappan K."/>
            <person name="Hauser L."/>
            <person name="Chang Y.J."/>
            <person name="Jefferies C.C."/>
            <person name="Saunders E."/>
            <person name="Brettin T."/>
            <person name="Detter J.C."/>
            <person name="Han C."/>
            <person name="Chain P."/>
            <person name="Bristow J."/>
            <person name="Eisen J.A."/>
            <person name="Markowitz V."/>
            <person name="Hugenholtz P."/>
            <person name="Kyrpides N.C."/>
            <person name="Klenk H.P."/>
            <person name="Lapidus A."/>
        </authorList>
    </citation>
    <scope>NUCLEOTIDE SEQUENCE [LARGE SCALE GENOMIC DNA]</scope>
    <source>
        <strain>ATCC BAA-8 / DSM 12333 / CCUG 43141 / JCM 11478 / NBRC 16432 / NCIMB 13614 / HKI 0122</strain>
    </source>
</reference>